<protein>
    <recommendedName>
        <fullName evidence="2">Photosystem II D2 protein</fullName>
        <shortName evidence="2">PSII D2 protein</shortName>
        <ecNumber evidence="2">1.10.3.9</ecNumber>
    </recommendedName>
    <alternativeName>
        <fullName evidence="2">Photosystem Q(A) protein</fullName>
    </alternativeName>
</protein>
<keyword id="KW-0007">Acetylation</keyword>
<keyword id="KW-0148">Chlorophyll</keyword>
<keyword id="KW-0150">Chloroplast</keyword>
<keyword id="KW-0157">Chromophore</keyword>
<keyword id="KW-0249">Electron transport</keyword>
<keyword id="KW-0408">Iron</keyword>
<keyword id="KW-0460">Magnesium</keyword>
<keyword id="KW-0472">Membrane</keyword>
<keyword id="KW-0479">Metal-binding</keyword>
<keyword id="KW-0560">Oxidoreductase</keyword>
<keyword id="KW-0597">Phosphoprotein</keyword>
<keyword id="KW-0602">Photosynthesis</keyword>
<keyword id="KW-0604">Photosystem II</keyword>
<keyword id="KW-0934">Plastid</keyword>
<keyword id="KW-1185">Reference proteome</keyword>
<keyword id="KW-0793">Thylakoid</keyword>
<keyword id="KW-0812">Transmembrane</keyword>
<keyword id="KW-1133">Transmembrane helix</keyword>
<keyword id="KW-0813">Transport</keyword>
<comment type="function">
    <text evidence="2">Photosystem II (PSII) is a light-driven water:plastoquinone oxidoreductase that uses light energy to abstract electrons from H(2)O, generating O(2) and a proton gradient subsequently used for ATP formation. It consists of a core antenna complex that captures photons, and an electron transfer chain that converts photonic excitation into a charge separation. The D1/D2 (PsbA/PsbD) reaction center heterodimer binds P680, the primary electron donor of PSII as well as several subsequent electron acceptors. D2 is needed for assembly of a stable PSII complex.</text>
</comment>
<comment type="catalytic activity">
    <reaction evidence="2">
        <text>2 a plastoquinone + 4 hnu + 2 H2O = 2 a plastoquinol + O2</text>
        <dbReference type="Rhea" id="RHEA:36359"/>
        <dbReference type="Rhea" id="RHEA-COMP:9561"/>
        <dbReference type="Rhea" id="RHEA-COMP:9562"/>
        <dbReference type="ChEBI" id="CHEBI:15377"/>
        <dbReference type="ChEBI" id="CHEBI:15379"/>
        <dbReference type="ChEBI" id="CHEBI:17757"/>
        <dbReference type="ChEBI" id="CHEBI:30212"/>
        <dbReference type="ChEBI" id="CHEBI:62192"/>
        <dbReference type="EC" id="1.10.3.9"/>
    </reaction>
</comment>
<comment type="cofactor">
    <text evidence="2">The D1/D2 heterodimer binds P680, chlorophylls that are the primary electron donor of PSII, and subsequent electron acceptors. It shares a non-heme iron and each subunit binds pheophytin, quinone, additional chlorophylls, carotenoids and lipids. There is also a Cl(-1) ion associated with D1 and D2, which is required for oxygen evolution. The PSII complex binds additional chlorophylls, carotenoids and specific lipids.</text>
</comment>
<comment type="subunit">
    <text evidence="2">PSII is composed of 1 copy each of membrane proteins PsbA, PsbB, PsbC, PsbD, PsbE, PsbF, PsbH, PsbI, PsbJ, PsbK, PsbL, PsbM, PsbT, PsbX, PsbY, PsbZ, Psb30/Ycf12, at least 3 peripheral proteins of the oxygen-evolving complex and a large number of cofactors. It forms dimeric complexes.</text>
</comment>
<comment type="subcellular location">
    <subcellularLocation>
        <location evidence="2">Plastid</location>
        <location evidence="2">Chloroplast thylakoid membrane</location>
        <topology evidence="2">Multi-pass membrane protein</topology>
    </subcellularLocation>
</comment>
<comment type="miscellaneous">
    <text evidence="2">2 of the reaction center chlorophylls (ChlD1 and ChlD2) are entirely coordinated by water.</text>
</comment>
<comment type="similarity">
    <text evidence="2">Belongs to the reaction center PufL/M/PsbA/D family.</text>
</comment>
<dbReference type="EC" id="1.10.3.9" evidence="2"/>
<dbReference type="EMBL" id="EU835853">
    <property type="protein sequence ID" value="ACH41067.1"/>
    <property type="molecule type" value="Genomic_DNA"/>
</dbReference>
<dbReference type="RefSeq" id="YP_002149730.1">
    <property type="nucleotide sequence ID" value="NC_011163.1"/>
</dbReference>
<dbReference type="SMR" id="B5LMM1"/>
<dbReference type="PaxDb" id="3827-XP_004489529.1"/>
<dbReference type="GeneID" id="6797468"/>
<dbReference type="KEGG" id="cam:6797468"/>
<dbReference type="OrthoDB" id="1924410at2759"/>
<dbReference type="Proteomes" id="UP000087171">
    <property type="component" value="Chloroplast Pltd"/>
</dbReference>
<dbReference type="GO" id="GO:0009535">
    <property type="term" value="C:chloroplast thylakoid membrane"/>
    <property type="evidence" value="ECO:0007669"/>
    <property type="project" value="UniProtKB-SubCell"/>
</dbReference>
<dbReference type="GO" id="GO:0009523">
    <property type="term" value="C:photosystem II"/>
    <property type="evidence" value="ECO:0007669"/>
    <property type="project" value="UniProtKB-KW"/>
</dbReference>
<dbReference type="GO" id="GO:0016168">
    <property type="term" value="F:chlorophyll binding"/>
    <property type="evidence" value="ECO:0007669"/>
    <property type="project" value="UniProtKB-UniRule"/>
</dbReference>
<dbReference type="GO" id="GO:0045156">
    <property type="term" value="F:electron transporter, transferring electrons within the cyclic electron transport pathway of photosynthesis activity"/>
    <property type="evidence" value="ECO:0007669"/>
    <property type="project" value="InterPro"/>
</dbReference>
<dbReference type="GO" id="GO:0005506">
    <property type="term" value="F:iron ion binding"/>
    <property type="evidence" value="ECO:0007669"/>
    <property type="project" value="UniProtKB-UniRule"/>
</dbReference>
<dbReference type="GO" id="GO:0010242">
    <property type="term" value="F:oxygen evolving activity"/>
    <property type="evidence" value="ECO:0007669"/>
    <property type="project" value="UniProtKB-EC"/>
</dbReference>
<dbReference type="GO" id="GO:0009772">
    <property type="term" value="P:photosynthetic electron transport in photosystem II"/>
    <property type="evidence" value="ECO:0007669"/>
    <property type="project" value="InterPro"/>
</dbReference>
<dbReference type="CDD" id="cd09288">
    <property type="entry name" value="Photosystem-II_D2"/>
    <property type="match status" value="1"/>
</dbReference>
<dbReference type="FunFam" id="1.20.85.10:FF:000001">
    <property type="entry name" value="photosystem II D2 protein-like"/>
    <property type="match status" value="1"/>
</dbReference>
<dbReference type="Gene3D" id="1.20.85.10">
    <property type="entry name" value="Photosystem II protein D1-like"/>
    <property type="match status" value="1"/>
</dbReference>
<dbReference type="HAMAP" id="MF_01383">
    <property type="entry name" value="PSII_PsbD_D2"/>
    <property type="match status" value="1"/>
</dbReference>
<dbReference type="InterPro" id="IPR055266">
    <property type="entry name" value="D1/D2"/>
</dbReference>
<dbReference type="InterPro" id="IPR036854">
    <property type="entry name" value="Photo_II_D1/D2_sf"/>
</dbReference>
<dbReference type="InterPro" id="IPR000484">
    <property type="entry name" value="Photo_RC_L/M"/>
</dbReference>
<dbReference type="InterPro" id="IPR055265">
    <property type="entry name" value="Photo_RC_L/M_CS"/>
</dbReference>
<dbReference type="InterPro" id="IPR005868">
    <property type="entry name" value="PSII_PsbD/D2"/>
</dbReference>
<dbReference type="NCBIfam" id="TIGR01152">
    <property type="entry name" value="psbD"/>
    <property type="match status" value="1"/>
</dbReference>
<dbReference type="PANTHER" id="PTHR33149:SF12">
    <property type="entry name" value="PHOTOSYSTEM II D2 PROTEIN"/>
    <property type="match status" value="1"/>
</dbReference>
<dbReference type="PANTHER" id="PTHR33149">
    <property type="entry name" value="PHOTOSYSTEM II PROTEIN D1"/>
    <property type="match status" value="1"/>
</dbReference>
<dbReference type="Pfam" id="PF00124">
    <property type="entry name" value="Photo_RC"/>
    <property type="match status" value="1"/>
</dbReference>
<dbReference type="PRINTS" id="PR00256">
    <property type="entry name" value="REACTNCENTRE"/>
</dbReference>
<dbReference type="SUPFAM" id="SSF81483">
    <property type="entry name" value="Bacterial photosystem II reaction centre, L and M subunits"/>
    <property type="match status" value="1"/>
</dbReference>
<dbReference type="PROSITE" id="PS00244">
    <property type="entry name" value="REACTION_CENTER"/>
    <property type="match status" value="1"/>
</dbReference>
<proteinExistence type="inferred from homology"/>
<reference key="1">
    <citation type="journal article" date="2008" name="Mol. Phylogenet. Evol.">
        <title>Complete plastid genome sequence of the chickpea (Cicer arietinum) and the phylogenetic distribution of rps12 and clpP intron losses among legumes (Leguminosae).</title>
        <authorList>
            <person name="Jansen R.K."/>
            <person name="Wojciechowski M.F."/>
            <person name="Sanniyasi E."/>
            <person name="Lee S.-B."/>
            <person name="Daniell H."/>
        </authorList>
    </citation>
    <scope>NUCLEOTIDE SEQUENCE [LARGE SCALE GENOMIC DNA]</scope>
</reference>
<feature type="initiator methionine" description="Removed" evidence="1">
    <location>
        <position position="1"/>
    </location>
</feature>
<feature type="chain" id="PRO_0000359635" description="Photosystem II D2 protein">
    <location>
        <begin position="2"/>
        <end position="353"/>
    </location>
</feature>
<feature type="transmembrane region" description="Helical" evidence="2">
    <location>
        <begin position="41"/>
        <end position="61"/>
    </location>
</feature>
<feature type="transmembrane region" description="Helical" evidence="2">
    <location>
        <begin position="125"/>
        <end position="141"/>
    </location>
</feature>
<feature type="transmembrane region" description="Helical" evidence="2">
    <location>
        <begin position="153"/>
        <end position="166"/>
    </location>
</feature>
<feature type="transmembrane region" description="Helical" evidence="2">
    <location>
        <begin position="208"/>
        <end position="228"/>
    </location>
</feature>
<feature type="transmembrane region" description="Helical" evidence="2">
    <location>
        <begin position="279"/>
        <end position="295"/>
    </location>
</feature>
<feature type="binding site" description="axial binding residue" evidence="2">
    <location>
        <position position="118"/>
    </location>
    <ligand>
        <name>chlorophyll a</name>
        <dbReference type="ChEBI" id="CHEBI:58416"/>
        <label>ChlzD2</label>
    </ligand>
    <ligandPart>
        <name>Mg</name>
        <dbReference type="ChEBI" id="CHEBI:25107"/>
    </ligandPart>
</feature>
<feature type="binding site" evidence="2">
    <location>
        <position position="130"/>
    </location>
    <ligand>
        <name>pheophytin a</name>
        <dbReference type="ChEBI" id="CHEBI:136840"/>
        <label>D2</label>
    </ligand>
</feature>
<feature type="binding site" evidence="2">
    <location>
        <position position="143"/>
    </location>
    <ligand>
        <name>pheophytin a</name>
        <dbReference type="ChEBI" id="CHEBI:136840"/>
        <label>D2</label>
    </ligand>
</feature>
<feature type="binding site" description="axial binding residue" evidence="2">
    <location>
        <position position="198"/>
    </location>
    <ligand>
        <name>chlorophyll a</name>
        <dbReference type="ChEBI" id="CHEBI:58416"/>
        <label>PD2</label>
    </ligand>
    <ligandPart>
        <name>Mg</name>
        <dbReference type="ChEBI" id="CHEBI:25107"/>
    </ligandPart>
</feature>
<feature type="binding site" evidence="2">
    <location>
        <position position="215"/>
    </location>
    <ligand>
        <name>a plastoquinone</name>
        <dbReference type="ChEBI" id="CHEBI:17757"/>
        <label>Q(A)</label>
    </ligand>
</feature>
<feature type="binding site" evidence="2">
    <location>
        <position position="215"/>
    </location>
    <ligand>
        <name>Fe cation</name>
        <dbReference type="ChEBI" id="CHEBI:24875"/>
        <note>ligand shared with heterodimeric partner</note>
    </ligand>
</feature>
<feature type="binding site" evidence="2">
    <location>
        <position position="262"/>
    </location>
    <ligand>
        <name>a plastoquinone</name>
        <dbReference type="ChEBI" id="CHEBI:17757"/>
        <label>Q(A)</label>
    </ligand>
</feature>
<feature type="binding site" evidence="2">
    <location>
        <position position="269"/>
    </location>
    <ligand>
        <name>Fe cation</name>
        <dbReference type="ChEBI" id="CHEBI:24875"/>
        <note>ligand shared with heterodimeric partner</note>
    </ligand>
</feature>
<feature type="modified residue" description="N-acetylthreonine" evidence="1">
    <location>
        <position position="2"/>
    </location>
</feature>
<feature type="modified residue" description="Phosphothreonine" evidence="1">
    <location>
        <position position="2"/>
    </location>
</feature>
<sequence>MTIALGKFTKDQNDLFDIMDDWLRRDRFVFVGWSGLLLFPCAYFAVGGWFTGTTFVTSWYTHGLASSYLEGCNFLTAAVSTPANSLAHSLLLLWGPEAQGDFTRWCQLGGLWTFVALHGAFGLIGFMLRQFELARSVQLRPYNAIAFSGPIAVFVSVFLIYPLGQSGWFFAPSFGVAAIFRFILFFQGFHNWTLNPFHMMGVAGVLGAALLCAIHGATVENTLFEDGDGANTFRAFNPTQAEETYSMVTANRFWSQIFGVAFSNKRWLHFFMLFVPVTGLWMSALGVVGLALNLRAYDFVSQEIRAAEDPEFETFYTKNILLNEGIRAWMAAQDQPHENLIFPEEVLPRGNAL</sequence>
<evidence type="ECO:0000250" key="1">
    <source>
        <dbReference type="UniProtKB" id="P56761"/>
    </source>
</evidence>
<evidence type="ECO:0000255" key="2">
    <source>
        <dbReference type="HAMAP-Rule" id="MF_01383"/>
    </source>
</evidence>
<geneLocation type="chloroplast"/>
<accession>B5LMM1</accession>
<organism>
    <name type="scientific">Cicer arietinum</name>
    <name type="common">Chickpea</name>
    <name type="synonym">Garbanzo</name>
    <dbReference type="NCBI Taxonomy" id="3827"/>
    <lineage>
        <taxon>Eukaryota</taxon>
        <taxon>Viridiplantae</taxon>
        <taxon>Streptophyta</taxon>
        <taxon>Embryophyta</taxon>
        <taxon>Tracheophyta</taxon>
        <taxon>Spermatophyta</taxon>
        <taxon>Magnoliopsida</taxon>
        <taxon>eudicotyledons</taxon>
        <taxon>Gunneridae</taxon>
        <taxon>Pentapetalae</taxon>
        <taxon>rosids</taxon>
        <taxon>fabids</taxon>
        <taxon>Fabales</taxon>
        <taxon>Fabaceae</taxon>
        <taxon>Papilionoideae</taxon>
        <taxon>50 kb inversion clade</taxon>
        <taxon>NPAAA clade</taxon>
        <taxon>Hologalegina</taxon>
        <taxon>IRL clade</taxon>
        <taxon>Cicereae</taxon>
        <taxon>Cicer</taxon>
    </lineage>
</organism>
<name>PSBD_CICAR</name>
<gene>
    <name evidence="2" type="primary">psbD</name>
</gene>